<gene>
    <name type="primary">XXXII</name>
</gene>
<dbReference type="EMBL" id="AY848689">
    <property type="protein sequence ID" value="AAX45919.1"/>
    <property type="molecule type" value="Genomic_DNA"/>
</dbReference>
<dbReference type="RefSeq" id="YP_001542612.1">
    <property type="nucleotide sequence ID" value="NC_001421.2"/>
</dbReference>
<dbReference type="RefSeq" id="YP_009639973.1">
    <property type="nucleotide sequence ID" value="NC_001421.2"/>
</dbReference>
<dbReference type="SMR" id="Q3T4M7"/>
<dbReference type="TCDB" id="1.K.2.1.1">
    <property type="family name" value="the prd1 phage dna delivery (prd1-dd) family"/>
</dbReference>
<dbReference type="GeneID" id="5729501"/>
<dbReference type="Proteomes" id="UP000002143">
    <property type="component" value="Segment"/>
</dbReference>
<dbReference type="GO" id="GO:0016020">
    <property type="term" value="C:membrane"/>
    <property type="evidence" value="ECO:0007669"/>
    <property type="project" value="UniProtKB-KW"/>
</dbReference>
<dbReference type="GO" id="GO:0039641">
    <property type="term" value="C:viral inner membrane"/>
    <property type="evidence" value="ECO:0007669"/>
    <property type="project" value="UniProtKB-KW"/>
</dbReference>
<dbReference type="GO" id="GO:0055036">
    <property type="term" value="C:virion membrane"/>
    <property type="evidence" value="ECO:0007669"/>
    <property type="project" value="UniProtKB-SubCell"/>
</dbReference>
<dbReference type="GO" id="GO:0046718">
    <property type="term" value="P:symbiont entry into host cell"/>
    <property type="evidence" value="ECO:0007669"/>
    <property type="project" value="UniProtKB-KW"/>
</dbReference>
<dbReference type="InterPro" id="IPR020085">
    <property type="entry name" value="DNA_delivery_prot_P32/34"/>
</dbReference>
<dbReference type="Pfam" id="PF11087">
    <property type="entry name" value="PRD1_DD"/>
    <property type="match status" value="1"/>
</dbReference>
<accession>Q3T4M7</accession>
<comment type="function">
    <text evidence="2 3">Component of the phage injection machinery. Required for DNA injection in the membrane transformation event. Involved in the formation of the membrane tail tube to connect the virus interior with the host cytosol. Essential for viral infectivity.</text>
</comment>
<comment type="subcellular location">
    <subcellularLocation>
        <location evidence="4">Virion membrane</location>
        <topology evidence="4">Single-pass membrane protein</topology>
    </subcellularLocation>
    <text evidence="4">Part of the capsid inner membrane.</text>
</comment>
<comment type="miscellaneous">
    <text>PRD1 virions are composed of a tail-less icosahedral capsid of diameter 63 nm, an inner protein-lipid membrane, and a dsDNA genome which is located inside the lipid vesicle. The DNA is packaged into a preformed procapsid. The internal membrane plays an active role in DNA delivery to the host cell by forming a tubular structure used for injecting the DNA into the host cytoplasm.</text>
</comment>
<reference key="1">
    <citation type="journal article" date="1991" name="Virology">
        <title>Genome organization of membrane-containing bacteriophage PRD1.</title>
        <authorList>
            <person name="Bamford J.K.H."/>
            <person name="Haenninen A.-L."/>
            <person name="Pakula T.M."/>
            <person name="Ojala P.M."/>
            <person name="Kalkkinen N."/>
            <person name="Frilander M."/>
            <person name="Bamford D.H."/>
        </authorList>
    </citation>
    <scope>NUCLEOTIDE SEQUENCE [GENOMIC DNA]</scope>
</reference>
<reference key="2">
    <citation type="journal article" date="2005" name="J. Mol. Biol.">
        <title>A snapshot of viral evolution from genome analysis of the tectiviridae family.</title>
        <authorList>
            <person name="Saren A.M."/>
            <person name="Ravantti J.J."/>
            <person name="Benson S.D."/>
            <person name="Burnett R.M."/>
            <person name="Paulin L."/>
            <person name="Bamford D.H."/>
            <person name="Bamford J.K.H."/>
        </authorList>
    </citation>
    <scope>NUCLEOTIDE SEQUENCE [GENOMIC DNA]</scope>
</reference>
<reference key="3">
    <citation type="journal article" date="2002" name="Mol. Microbiol.">
        <title>Sequential model of phage PRD1 DNA delivery: active involvement of the viral membrane.</title>
        <authorList>
            <person name="Grahn A.M."/>
            <person name="Daugelavicius R."/>
            <person name="Bamford D.H."/>
        </authorList>
    </citation>
    <scope>FUNCTION</scope>
</reference>
<reference key="4">
    <citation type="journal article" date="2002" name="J. Virol.">
        <title>The small viral membrane-associated protein P32 is involved in bacteriophage PRD1 DNA entry.</title>
        <authorList>
            <person name="Grahn A.M."/>
            <person name="Daugelavicius R."/>
            <person name="Bamford D.H."/>
        </authorList>
    </citation>
    <scope>FUNCTION</scope>
</reference>
<organism>
    <name type="scientific">Enterobacteria phage PRD1</name>
    <name type="common">Bacteriophage PRD1</name>
    <dbReference type="NCBI Taxonomy" id="10658"/>
    <lineage>
        <taxon>Viruses</taxon>
        <taxon>Varidnaviria</taxon>
        <taxon>Bamfordvirae</taxon>
        <taxon>Preplasmiviricota</taxon>
        <taxon>Tectiliviricetes</taxon>
        <taxon>Kalamavirales</taxon>
        <taxon>Tectiviridae</taxon>
        <taxon>Alphatectivirus</taxon>
        <taxon>Alphatectivirus PRD1</taxon>
    </lineage>
</organism>
<proteinExistence type="predicted"/>
<name>VP32_BPPRD</name>
<organismHost>
    <name type="scientific">Acinetobacter calcoaceticus</name>
    <dbReference type="NCBI Taxonomy" id="471"/>
</organismHost>
<organismHost>
    <name type="scientific">Escherichia coli</name>
    <dbReference type="NCBI Taxonomy" id="562"/>
</organismHost>
<organismHost>
    <name type="scientific">Proteus mirabilis</name>
    <dbReference type="NCBI Taxonomy" id="584"/>
</organismHost>
<organismHost>
    <name type="scientific">Pseudomonas aeruginosa</name>
    <dbReference type="NCBI Taxonomy" id="287"/>
</organismHost>
<organismHost>
    <name type="scientific">Pseudomonas fluorescens</name>
    <dbReference type="NCBI Taxonomy" id="294"/>
</organismHost>
<organismHost>
    <name type="scientific">Pseudomonas putida</name>
    <name type="common">Arthrobacter siderocapsulatus</name>
    <dbReference type="NCBI Taxonomy" id="303"/>
</organismHost>
<organismHost>
    <name type="scientific">Salmonella typhimurium</name>
    <dbReference type="NCBI Taxonomy" id="90371"/>
</organismHost>
<organismHost>
    <name type="scientific">Vibrio cholerae</name>
    <dbReference type="NCBI Taxonomy" id="666"/>
</organismHost>
<feature type="chain" id="PRO_0000234090" description="Protein P32">
    <location>
        <begin position="1"/>
        <end position="54"/>
    </location>
</feature>
<feature type="transmembrane region" description="Helical" evidence="1">
    <location>
        <begin position="4"/>
        <end position="24"/>
    </location>
</feature>
<sequence>MGEFGKTLITIVTAIIGVAIIAVIVSQRSNTAGVIQSATSGFSNILKSALAPII</sequence>
<protein>
    <recommendedName>
        <fullName>Protein P32</fullName>
    </recommendedName>
</protein>
<keyword id="KW-1231">Capsid inner membrane protein</keyword>
<keyword id="KW-0472">Membrane</keyword>
<keyword id="KW-1185">Reference proteome</keyword>
<keyword id="KW-0812">Transmembrane</keyword>
<keyword id="KW-1133">Transmembrane helix</keyword>
<keyword id="KW-1171">Viral genome ejection through host cell envelope</keyword>
<keyword id="KW-1162">Viral penetration into host cytoplasm</keyword>
<keyword id="KW-0946">Virion</keyword>
<keyword id="KW-1160">Virus entry into host cell</keyword>
<evidence type="ECO:0000255" key="1"/>
<evidence type="ECO:0000269" key="2">
    <source>
    </source>
</evidence>
<evidence type="ECO:0000269" key="3">
    <source>
    </source>
</evidence>
<evidence type="ECO:0000305" key="4"/>